<protein>
    <recommendedName>
        <fullName evidence="1">Elongation factor 4</fullName>
        <shortName evidence="1">EF-4</shortName>
        <ecNumber evidence="1">3.6.5.n1</ecNumber>
    </recommendedName>
    <alternativeName>
        <fullName evidence="1">Ribosomal back-translocase LepA</fullName>
    </alternativeName>
</protein>
<gene>
    <name evidence="1" type="primary">lepA</name>
    <name type="ordered locus">HCH_01797</name>
</gene>
<reference key="1">
    <citation type="journal article" date="2005" name="Nucleic Acids Res.">
        <title>Genomic blueprint of Hahella chejuensis, a marine microbe producing an algicidal agent.</title>
        <authorList>
            <person name="Jeong H."/>
            <person name="Yim J.H."/>
            <person name="Lee C."/>
            <person name="Choi S.-H."/>
            <person name="Park Y.K."/>
            <person name="Yoon S.H."/>
            <person name="Hur C.-G."/>
            <person name="Kang H.-Y."/>
            <person name="Kim D."/>
            <person name="Lee H.H."/>
            <person name="Park K.H."/>
            <person name="Park S.-H."/>
            <person name="Park H.-S."/>
            <person name="Lee H.K."/>
            <person name="Oh T.K."/>
            <person name="Kim J.F."/>
        </authorList>
    </citation>
    <scope>NUCLEOTIDE SEQUENCE [LARGE SCALE GENOMIC DNA]</scope>
    <source>
        <strain>KCTC 2396</strain>
    </source>
</reference>
<keyword id="KW-0997">Cell inner membrane</keyword>
<keyword id="KW-1003">Cell membrane</keyword>
<keyword id="KW-0342">GTP-binding</keyword>
<keyword id="KW-0378">Hydrolase</keyword>
<keyword id="KW-0472">Membrane</keyword>
<keyword id="KW-0547">Nucleotide-binding</keyword>
<keyword id="KW-0648">Protein biosynthesis</keyword>
<keyword id="KW-1185">Reference proteome</keyword>
<sequence length="599" mass="66092">MSKLNHIRNFSIIAHIDHGKSTLADRFIQYCGGLSDREMSEQVLDSMDIERERGITIKAQSVTLYYDAKDGSRYQLNFIDTPGHVDFSYEVSRSLAACEGALLVVDAAQGVEAQSVANCYTAIEMGLEVIPILNKMDLPQAEPARVRHEIEEIIGIDAAGAVEASAKAGMGIQESLEQIVQLVPPPEGDPDAPLQALIIDSWFDNYLGVVSLVRVKNGTLNKGDKILIKSTKTQELVTSIGVFTPKRTETGCLKAGEVGYVIAGIKDIHGAPVGDTITLAKTPDVASLPGFKRVQPQVYAGVFPVSSDDYEDFRDALDKLTLNDASLFFEPETSDALGFGFRCGFLGMLHMEIIQERLEREYDLDLITTAPTVVYEVLTKKNEVIKVDNPSRLPDPGFIEEMREPIVEANILVPQAYLGNVISLCVEKRGVQKNMQFLGNQVALSYELPMGEVVLDFFDRLKSVSRGYASLDYHFVRFQAANLVRLDILINGDKVDALALIVHRDNAASRGRLLTEKMKELIPRQMFDVAIQAAIGGQIVSRTTVKALRKNVLAKCYGGDVSRKKKLLQKQKEGKKRMKQVGSVEIPQDAFLAVLKVDK</sequence>
<feature type="chain" id="PRO_0000265664" description="Elongation factor 4">
    <location>
        <begin position="1"/>
        <end position="599"/>
    </location>
</feature>
<feature type="domain" description="tr-type G">
    <location>
        <begin position="5"/>
        <end position="187"/>
    </location>
</feature>
<feature type="binding site" evidence="1">
    <location>
        <begin position="17"/>
        <end position="22"/>
    </location>
    <ligand>
        <name>GTP</name>
        <dbReference type="ChEBI" id="CHEBI:37565"/>
    </ligand>
</feature>
<feature type="binding site" evidence="1">
    <location>
        <begin position="134"/>
        <end position="137"/>
    </location>
    <ligand>
        <name>GTP</name>
        <dbReference type="ChEBI" id="CHEBI:37565"/>
    </ligand>
</feature>
<comment type="function">
    <text evidence="1">Required for accurate and efficient protein synthesis under certain stress conditions. May act as a fidelity factor of the translation reaction, by catalyzing a one-codon backward translocation of tRNAs on improperly translocated ribosomes. Back-translocation proceeds from a post-translocation (POST) complex to a pre-translocation (PRE) complex, thus giving elongation factor G a second chance to translocate the tRNAs correctly. Binds to ribosomes in a GTP-dependent manner.</text>
</comment>
<comment type="catalytic activity">
    <reaction evidence="1">
        <text>GTP + H2O = GDP + phosphate + H(+)</text>
        <dbReference type="Rhea" id="RHEA:19669"/>
        <dbReference type="ChEBI" id="CHEBI:15377"/>
        <dbReference type="ChEBI" id="CHEBI:15378"/>
        <dbReference type="ChEBI" id="CHEBI:37565"/>
        <dbReference type="ChEBI" id="CHEBI:43474"/>
        <dbReference type="ChEBI" id="CHEBI:58189"/>
        <dbReference type="EC" id="3.6.5.n1"/>
    </reaction>
</comment>
<comment type="subcellular location">
    <subcellularLocation>
        <location evidence="1">Cell inner membrane</location>
        <topology evidence="1">Peripheral membrane protein</topology>
        <orientation evidence="1">Cytoplasmic side</orientation>
    </subcellularLocation>
</comment>
<comment type="similarity">
    <text evidence="1">Belongs to the TRAFAC class translation factor GTPase superfamily. Classic translation factor GTPase family. LepA subfamily.</text>
</comment>
<proteinExistence type="inferred from homology"/>
<evidence type="ECO:0000255" key="1">
    <source>
        <dbReference type="HAMAP-Rule" id="MF_00071"/>
    </source>
</evidence>
<accession>Q2SL35</accession>
<organism>
    <name type="scientific">Hahella chejuensis (strain KCTC 2396)</name>
    <dbReference type="NCBI Taxonomy" id="349521"/>
    <lineage>
        <taxon>Bacteria</taxon>
        <taxon>Pseudomonadati</taxon>
        <taxon>Pseudomonadota</taxon>
        <taxon>Gammaproteobacteria</taxon>
        <taxon>Oceanospirillales</taxon>
        <taxon>Hahellaceae</taxon>
        <taxon>Hahella</taxon>
    </lineage>
</organism>
<name>LEPA_HAHCH</name>
<dbReference type="EC" id="3.6.5.n1" evidence="1"/>
<dbReference type="EMBL" id="CP000155">
    <property type="protein sequence ID" value="ABC28639.1"/>
    <property type="molecule type" value="Genomic_DNA"/>
</dbReference>
<dbReference type="RefSeq" id="WP_011395711.1">
    <property type="nucleotide sequence ID" value="NC_007645.1"/>
</dbReference>
<dbReference type="SMR" id="Q2SL35"/>
<dbReference type="STRING" id="349521.HCH_01797"/>
<dbReference type="KEGG" id="hch:HCH_01797"/>
<dbReference type="eggNOG" id="COG0481">
    <property type="taxonomic scope" value="Bacteria"/>
</dbReference>
<dbReference type="HOGENOM" id="CLU_009995_3_3_6"/>
<dbReference type="OrthoDB" id="9801472at2"/>
<dbReference type="Proteomes" id="UP000000238">
    <property type="component" value="Chromosome"/>
</dbReference>
<dbReference type="GO" id="GO:0005886">
    <property type="term" value="C:plasma membrane"/>
    <property type="evidence" value="ECO:0007669"/>
    <property type="project" value="UniProtKB-SubCell"/>
</dbReference>
<dbReference type="GO" id="GO:0005525">
    <property type="term" value="F:GTP binding"/>
    <property type="evidence" value="ECO:0007669"/>
    <property type="project" value="UniProtKB-UniRule"/>
</dbReference>
<dbReference type="GO" id="GO:0003924">
    <property type="term" value="F:GTPase activity"/>
    <property type="evidence" value="ECO:0007669"/>
    <property type="project" value="UniProtKB-UniRule"/>
</dbReference>
<dbReference type="GO" id="GO:0097216">
    <property type="term" value="F:guanosine tetraphosphate binding"/>
    <property type="evidence" value="ECO:0007669"/>
    <property type="project" value="UniProtKB-ARBA"/>
</dbReference>
<dbReference type="GO" id="GO:0043022">
    <property type="term" value="F:ribosome binding"/>
    <property type="evidence" value="ECO:0007669"/>
    <property type="project" value="UniProtKB-UniRule"/>
</dbReference>
<dbReference type="GO" id="GO:0003746">
    <property type="term" value="F:translation elongation factor activity"/>
    <property type="evidence" value="ECO:0007669"/>
    <property type="project" value="UniProtKB-UniRule"/>
</dbReference>
<dbReference type="GO" id="GO:0045727">
    <property type="term" value="P:positive regulation of translation"/>
    <property type="evidence" value="ECO:0007669"/>
    <property type="project" value="UniProtKB-UniRule"/>
</dbReference>
<dbReference type="CDD" id="cd03699">
    <property type="entry name" value="EF4_II"/>
    <property type="match status" value="1"/>
</dbReference>
<dbReference type="CDD" id="cd16260">
    <property type="entry name" value="EF4_III"/>
    <property type="match status" value="1"/>
</dbReference>
<dbReference type="CDD" id="cd01890">
    <property type="entry name" value="LepA"/>
    <property type="match status" value="1"/>
</dbReference>
<dbReference type="CDD" id="cd03709">
    <property type="entry name" value="lepA_C"/>
    <property type="match status" value="1"/>
</dbReference>
<dbReference type="FunFam" id="3.40.50.300:FF:000078">
    <property type="entry name" value="Elongation factor 4"/>
    <property type="match status" value="1"/>
</dbReference>
<dbReference type="FunFam" id="2.40.30.10:FF:000015">
    <property type="entry name" value="Translation factor GUF1, mitochondrial"/>
    <property type="match status" value="1"/>
</dbReference>
<dbReference type="FunFam" id="3.30.70.240:FF:000007">
    <property type="entry name" value="Translation factor GUF1, mitochondrial"/>
    <property type="match status" value="1"/>
</dbReference>
<dbReference type="FunFam" id="3.30.70.2570:FF:000001">
    <property type="entry name" value="Translation factor GUF1, mitochondrial"/>
    <property type="match status" value="1"/>
</dbReference>
<dbReference type="FunFam" id="3.30.70.870:FF:000004">
    <property type="entry name" value="Translation factor GUF1, mitochondrial"/>
    <property type="match status" value="1"/>
</dbReference>
<dbReference type="Gene3D" id="3.30.70.240">
    <property type="match status" value="1"/>
</dbReference>
<dbReference type="Gene3D" id="3.30.70.2570">
    <property type="entry name" value="Elongation factor 4, C-terminal domain"/>
    <property type="match status" value="1"/>
</dbReference>
<dbReference type="Gene3D" id="3.30.70.870">
    <property type="entry name" value="Elongation Factor G (Translational Gtpase), domain 3"/>
    <property type="match status" value="1"/>
</dbReference>
<dbReference type="Gene3D" id="3.40.50.300">
    <property type="entry name" value="P-loop containing nucleotide triphosphate hydrolases"/>
    <property type="match status" value="1"/>
</dbReference>
<dbReference type="Gene3D" id="2.40.30.10">
    <property type="entry name" value="Translation factors"/>
    <property type="match status" value="1"/>
</dbReference>
<dbReference type="HAMAP" id="MF_00071">
    <property type="entry name" value="LepA"/>
    <property type="match status" value="1"/>
</dbReference>
<dbReference type="InterPro" id="IPR006297">
    <property type="entry name" value="EF-4"/>
</dbReference>
<dbReference type="InterPro" id="IPR035647">
    <property type="entry name" value="EFG_III/V"/>
</dbReference>
<dbReference type="InterPro" id="IPR000640">
    <property type="entry name" value="EFG_V-like"/>
</dbReference>
<dbReference type="InterPro" id="IPR004161">
    <property type="entry name" value="EFTu-like_2"/>
</dbReference>
<dbReference type="InterPro" id="IPR031157">
    <property type="entry name" value="G_TR_CS"/>
</dbReference>
<dbReference type="InterPro" id="IPR038363">
    <property type="entry name" value="LepA_C_sf"/>
</dbReference>
<dbReference type="InterPro" id="IPR013842">
    <property type="entry name" value="LepA_CTD"/>
</dbReference>
<dbReference type="InterPro" id="IPR035654">
    <property type="entry name" value="LepA_IV"/>
</dbReference>
<dbReference type="InterPro" id="IPR027417">
    <property type="entry name" value="P-loop_NTPase"/>
</dbReference>
<dbReference type="InterPro" id="IPR005225">
    <property type="entry name" value="Small_GTP-bd"/>
</dbReference>
<dbReference type="InterPro" id="IPR000795">
    <property type="entry name" value="T_Tr_GTP-bd_dom"/>
</dbReference>
<dbReference type="InterPro" id="IPR009000">
    <property type="entry name" value="Transl_B-barrel_sf"/>
</dbReference>
<dbReference type="NCBIfam" id="TIGR01393">
    <property type="entry name" value="lepA"/>
    <property type="match status" value="1"/>
</dbReference>
<dbReference type="NCBIfam" id="TIGR00231">
    <property type="entry name" value="small_GTP"/>
    <property type="match status" value="1"/>
</dbReference>
<dbReference type="PANTHER" id="PTHR43512:SF4">
    <property type="entry name" value="TRANSLATION FACTOR GUF1 HOMOLOG, CHLOROPLASTIC"/>
    <property type="match status" value="1"/>
</dbReference>
<dbReference type="PANTHER" id="PTHR43512">
    <property type="entry name" value="TRANSLATION FACTOR GUF1-RELATED"/>
    <property type="match status" value="1"/>
</dbReference>
<dbReference type="Pfam" id="PF00679">
    <property type="entry name" value="EFG_C"/>
    <property type="match status" value="1"/>
</dbReference>
<dbReference type="Pfam" id="PF00009">
    <property type="entry name" value="GTP_EFTU"/>
    <property type="match status" value="1"/>
</dbReference>
<dbReference type="Pfam" id="PF03144">
    <property type="entry name" value="GTP_EFTU_D2"/>
    <property type="match status" value="1"/>
</dbReference>
<dbReference type="Pfam" id="PF06421">
    <property type="entry name" value="LepA_C"/>
    <property type="match status" value="1"/>
</dbReference>
<dbReference type="PRINTS" id="PR00315">
    <property type="entry name" value="ELONGATNFCT"/>
</dbReference>
<dbReference type="SUPFAM" id="SSF54980">
    <property type="entry name" value="EF-G C-terminal domain-like"/>
    <property type="match status" value="2"/>
</dbReference>
<dbReference type="SUPFAM" id="SSF52540">
    <property type="entry name" value="P-loop containing nucleoside triphosphate hydrolases"/>
    <property type="match status" value="1"/>
</dbReference>
<dbReference type="SUPFAM" id="SSF50447">
    <property type="entry name" value="Translation proteins"/>
    <property type="match status" value="1"/>
</dbReference>
<dbReference type="PROSITE" id="PS00301">
    <property type="entry name" value="G_TR_1"/>
    <property type="match status" value="1"/>
</dbReference>
<dbReference type="PROSITE" id="PS51722">
    <property type="entry name" value="G_TR_2"/>
    <property type="match status" value="1"/>
</dbReference>